<name>RLMH_BORBR</name>
<dbReference type="EC" id="2.1.1.177" evidence="1"/>
<dbReference type="EMBL" id="BX640442">
    <property type="protein sequence ID" value="CAE32363.1"/>
    <property type="molecule type" value="Genomic_DNA"/>
</dbReference>
<dbReference type="RefSeq" id="WP_003813199.1">
    <property type="nucleotide sequence ID" value="NC_002927.3"/>
</dbReference>
<dbReference type="SMR" id="Q7WL83"/>
<dbReference type="GeneID" id="69602210"/>
<dbReference type="KEGG" id="bbr:BB1866"/>
<dbReference type="eggNOG" id="COG1576">
    <property type="taxonomic scope" value="Bacteria"/>
</dbReference>
<dbReference type="HOGENOM" id="CLU_100552_1_0_4"/>
<dbReference type="Proteomes" id="UP000001027">
    <property type="component" value="Chromosome"/>
</dbReference>
<dbReference type="GO" id="GO:0005737">
    <property type="term" value="C:cytoplasm"/>
    <property type="evidence" value="ECO:0007669"/>
    <property type="project" value="UniProtKB-SubCell"/>
</dbReference>
<dbReference type="GO" id="GO:0070038">
    <property type="term" value="F:rRNA (pseudouridine-N3-)-methyltransferase activity"/>
    <property type="evidence" value="ECO:0007669"/>
    <property type="project" value="UniProtKB-UniRule"/>
</dbReference>
<dbReference type="CDD" id="cd18081">
    <property type="entry name" value="RlmH-like"/>
    <property type="match status" value="1"/>
</dbReference>
<dbReference type="Gene3D" id="3.40.1280.10">
    <property type="match status" value="1"/>
</dbReference>
<dbReference type="HAMAP" id="MF_00658">
    <property type="entry name" value="23SrRNA_methyltr_H"/>
    <property type="match status" value="1"/>
</dbReference>
<dbReference type="InterPro" id="IPR029028">
    <property type="entry name" value="Alpha/beta_knot_MTases"/>
</dbReference>
<dbReference type="InterPro" id="IPR003742">
    <property type="entry name" value="RlmH-like"/>
</dbReference>
<dbReference type="InterPro" id="IPR029026">
    <property type="entry name" value="tRNA_m1G_MTases_N"/>
</dbReference>
<dbReference type="NCBIfam" id="NF000986">
    <property type="entry name" value="PRK00103.1-4"/>
    <property type="match status" value="1"/>
</dbReference>
<dbReference type="PANTHER" id="PTHR33603">
    <property type="entry name" value="METHYLTRANSFERASE"/>
    <property type="match status" value="1"/>
</dbReference>
<dbReference type="PANTHER" id="PTHR33603:SF1">
    <property type="entry name" value="RIBOSOMAL RNA LARGE SUBUNIT METHYLTRANSFERASE H"/>
    <property type="match status" value="1"/>
</dbReference>
<dbReference type="Pfam" id="PF02590">
    <property type="entry name" value="SPOUT_MTase"/>
    <property type="match status" value="1"/>
</dbReference>
<dbReference type="PIRSF" id="PIRSF004505">
    <property type="entry name" value="MT_bac"/>
    <property type="match status" value="1"/>
</dbReference>
<dbReference type="SUPFAM" id="SSF75217">
    <property type="entry name" value="alpha/beta knot"/>
    <property type="match status" value="1"/>
</dbReference>
<proteinExistence type="inferred from homology"/>
<feature type="chain" id="PRO_0000198095" description="Ribosomal RNA large subunit methyltransferase H">
    <location>
        <begin position="1"/>
        <end position="156"/>
    </location>
</feature>
<feature type="binding site" evidence="1">
    <location>
        <position position="73"/>
    </location>
    <ligand>
        <name>S-adenosyl-L-methionine</name>
        <dbReference type="ChEBI" id="CHEBI:59789"/>
    </ligand>
</feature>
<feature type="binding site" evidence="1">
    <location>
        <position position="104"/>
    </location>
    <ligand>
        <name>S-adenosyl-L-methionine</name>
        <dbReference type="ChEBI" id="CHEBI:59789"/>
    </ligand>
</feature>
<feature type="binding site" evidence="1">
    <location>
        <begin position="123"/>
        <end position="128"/>
    </location>
    <ligand>
        <name>S-adenosyl-L-methionine</name>
        <dbReference type="ChEBI" id="CHEBI:59789"/>
    </ligand>
</feature>
<comment type="function">
    <text evidence="1">Specifically methylates the pseudouridine at position 1915 (m3Psi1915) in 23S rRNA.</text>
</comment>
<comment type="catalytic activity">
    <reaction evidence="1">
        <text>pseudouridine(1915) in 23S rRNA + S-adenosyl-L-methionine = N(3)-methylpseudouridine(1915) in 23S rRNA + S-adenosyl-L-homocysteine + H(+)</text>
        <dbReference type="Rhea" id="RHEA:42752"/>
        <dbReference type="Rhea" id="RHEA-COMP:10221"/>
        <dbReference type="Rhea" id="RHEA-COMP:10222"/>
        <dbReference type="ChEBI" id="CHEBI:15378"/>
        <dbReference type="ChEBI" id="CHEBI:57856"/>
        <dbReference type="ChEBI" id="CHEBI:59789"/>
        <dbReference type="ChEBI" id="CHEBI:65314"/>
        <dbReference type="ChEBI" id="CHEBI:74486"/>
        <dbReference type="EC" id="2.1.1.177"/>
    </reaction>
</comment>
<comment type="subunit">
    <text evidence="1">Homodimer.</text>
</comment>
<comment type="subcellular location">
    <subcellularLocation>
        <location evidence="1">Cytoplasm</location>
    </subcellularLocation>
</comment>
<comment type="similarity">
    <text evidence="1">Belongs to the RNA methyltransferase RlmH family.</text>
</comment>
<keyword id="KW-0963">Cytoplasm</keyword>
<keyword id="KW-0489">Methyltransferase</keyword>
<keyword id="KW-0698">rRNA processing</keyword>
<keyword id="KW-0949">S-adenosyl-L-methionine</keyword>
<keyword id="KW-0808">Transferase</keyword>
<sequence length="156" mass="17194">MKLIVAAVGTRMPGWVETAWDDYAKRLPADCALELREIKPEPRTSGKTPAQMMAAEARRIETALPPGVLRIALDERGRDLTTVALSQQLEKWRAGGRDVAFLVGGPDGLDAALKASCEGLLRLSSLTLPHPMVRVLLAEQLYRAWAIMTNHPYHRA</sequence>
<protein>
    <recommendedName>
        <fullName evidence="1">Ribosomal RNA large subunit methyltransferase H</fullName>
        <ecNumber evidence="1">2.1.1.177</ecNumber>
    </recommendedName>
    <alternativeName>
        <fullName evidence="1">23S rRNA (pseudouridine1915-N3)-methyltransferase</fullName>
    </alternativeName>
    <alternativeName>
        <fullName evidence="1">23S rRNA m3Psi1915 methyltransferase</fullName>
    </alternativeName>
    <alternativeName>
        <fullName evidence="1">rRNA (pseudouridine-N3-)-methyltransferase RlmH</fullName>
    </alternativeName>
</protein>
<evidence type="ECO:0000255" key="1">
    <source>
        <dbReference type="HAMAP-Rule" id="MF_00658"/>
    </source>
</evidence>
<organism>
    <name type="scientific">Bordetella bronchiseptica (strain ATCC BAA-588 / NCTC 13252 / RB50)</name>
    <name type="common">Alcaligenes bronchisepticus</name>
    <dbReference type="NCBI Taxonomy" id="257310"/>
    <lineage>
        <taxon>Bacteria</taxon>
        <taxon>Pseudomonadati</taxon>
        <taxon>Pseudomonadota</taxon>
        <taxon>Betaproteobacteria</taxon>
        <taxon>Burkholderiales</taxon>
        <taxon>Alcaligenaceae</taxon>
        <taxon>Bordetella</taxon>
    </lineage>
</organism>
<accession>Q7WL83</accession>
<reference key="1">
    <citation type="journal article" date="2003" name="Nat. Genet.">
        <title>Comparative analysis of the genome sequences of Bordetella pertussis, Bordetella parapertussis and Bordetella bronchiseptica.</title>
        <authorList>
            <person name="Parkhill J."/>
            <person name="Sebaihia M."/>
            <person name="Preston A."/>
            <person name="Murphy L.D."/>
            <person name="Thomson N.R."/>
            <person name="Harris D.E."/>
            <person name="Holden M.T.G."/>
            <person name="Churcher C.M."/>
            <person name="Bentley S.D."/>
            <person name="Mungall K.L."/>
            <person name="Cerdeno-Tarraga A.-M."/>
            <person name="Temple L."/>
            <person name="James K.D."/>
            <person name="Harris B."/>
            <person name="Quail M.A."/>
            <person name="Achtman M."/>
            <person name="Atkin R."/>
            <person name="Baker S."/>
            <person name="Basham D."/>
            <person name="Bason N."/>
            <person name="Cherevach I."/>
            <person name="Chillingworth T."/>
            <person name="Collins M."/>
            <person name="Cronin A."/>
            <person name="Davis P."/>
            <person name="Doggett J."/>
            <person name="Feltwell T."/>
            <person name="Goble A."/>
            <person name="Hamlin N."/>
            <person name="Hauser H."/>
            <person name="Holroyd S."/>
            <person name="Jagels K."/>
            <person name="Leather S."/>
            <person name="Moule S."/>
            <person name="Norberczak H."/>
            <person name="O'Neil S."/>
            <person name="Ormond D."/>
            <person name="Price C."/>
            <person name="Rabbinowitsch E."/>
            <person name="Rutter S."/>
            <person name="Sanders M."/>
            <person name="Saunders D."/>
            <person name="Seeger K."/>
            <person name="Sharp S."/>
            <person name="Simmonds M."/>
            <person name="Skelton J."/>
            <person name="Squares R."/>
            <person name="Squares S."/>
            <person name="Stevens K."/>
            <person name="Unwin L."/>
            <person name="Whitehead S."/>
            <person name="Barrell B.G."/>
            <person name="Maskell D.J."/>
        </authorList>
    </citation>
    <scope>NUCLEOTIDE SEQUENCE [LARGE SCALE GENOMIC DNA]</scope>
    <source>
        <strain>ATCC BAA-588 / NCTC 13252 / RB50</strain>
    </source>
</reference>
<gene>
    <name evidence="1" type="primary">rlmH</name>
    <name type="ordered locus">BB1866</name>
</gene>